<evidence type="ECO:0000255" key="1">
    <source>
        <dbReference type="HAMAP-Rule" id="MF_00145"/>
    </source>
</evidence>
<organism>
    <name type="scientific">Acinetobacter baumannii (strain AB0057)</name>
    <dbReference type="NCBI Taxonomy" id="480119"/>
    <lineage>
        <taxon>Bacteria</taxon>
        <taxon>Pseudomonadati</taxon>
        <taxon>Pseudomonadota</taxon>
        <taxon>Gammaproteobacteria</taxon>
        <taxon>Moraxellales</taxon>
        <taxon>Moraxellaceae</taxon>
        <taxon>Acinetobacter</taxon>
        <taxon>Acinetobacter calcoaceticus/baumannii complex</taxon>
    </lineage>
</organism>
<keyword id="KW-0067">ATP-binding</keyword>
<keyword id="KW-0963">Cytoplasm</keyword>
<keyword id="KW-0324">Glycolysis</keyword>
<keyword id="KW-0418">Kinase</keyword>
<keyword id="KW-0547">Nucleotide-binding</keyword>
<keyword id="KW-0808">Transferase</keyword>
<feature type="chain" id="PRO_1000192789" description="Phosphoglycerate kinase">
    <location>
        <begin position="1"/>
        <end position="395"/>
    </location>
</feature>
<feature type="binding site" evidence="1">
    <location>
        <begin position="21"/>
        <end position="23"/>
    </location>
    <ligand>
        <name>substrate</name>
    </ligand>
</feature>
<feature type="binding site" evidence="1">
    <location>
        <position position="36"/>
    </location>
    <ligand>
        <name>substrate</name>
    </ligand>
</feature>
<feature type="binding site" evidence="1">
    <location>
        <begin position="59"/>
        <end position="62"/>
    </location>
    <ligand>
        <name>substrate</name>
    </ligand>
</feature>
<feature type="binding site" evidence="1">
    <location>
        <position position="113"/>
    </location>
    <ligand>
        <name>substrate</name>
    </ligand>
</feature>
<feature type="binding site" evidence="1">
    <location>
        <position position="146"/>
    </location>
    <ligand>
        <name>substrate</name>
    </ligand>
</feature>
<feature type="binding site" evidence="1">
    <location>
        <position position="197"/>
    </location>
    <ligand>
        <name>ATP</name>
        <dbReference type="ChEBI" id="CHEBI:30616"/>
    </ligand>
</feature>
<feature type="binding site" evidence="1">
    <location>
        <position position="324"/>
    </location>
    <ligand>
        <name>ATP</name>
        <dbReference type="ChEBI" id="CHEBI:30616"/>
    </ligand>
</feature>
<feature type="binding site" evidence="1">
    <location>
        <begin position="350"/>
        <end position="353"/>
    </location>
    <ligand>
        <name>ATP</name>
        <dbReference type="ChEBI" id="CHEBI:30616"/>
    </ligand>
</feature>
<name>PGK_ACIB5</name>
<accession>B7I501</accession>
<protein>
    <recommendedName>
        <fullName evidence="1">Phosphoglycerate kinase</fullName>
        <ecNumber evidence="1">2.7.2.3</ecNumber>
    </recommendedName>
</protein>
<proteinExistence type="inferred from homology"/>
<dbReference type="EC" id="2.7.2.3" evidence="1"/>
<dbReference type="EMBL" id="CP001182">
    <property type="protein sequence ID" value="ACJ41166.1"/>
    <property type="molecule type" value="Genomic_DNA"/>
</dbReference>
<dbReference type="RefSeq" id="WP_001011093.1">
    <property type="nucleotide sequence ID" value="NC_011586.2"/>
</dbReference>
<dbReference type="SMR" id="B7I501"/>
<dbReference type="KEGG" id="abn:AB57_1787"/>
<dbReference type="HOGENOM" id="CLU_025427_0_2_6"/>
<dbReference type="UniPathway" id="UPA00109">
    <property type="reaction ID" value="UER00185"/>
</dbReference>
<dbReference type="Proteomes" id="UP000007094">
    <property type="component" value="Chromosome"/>
</dbReference>
<dbReference type="GO" id="GO:0005829">
    <property type="term" value="C:cytosol"/>
    <property type="evidence" value="ECO:0007669"/>
    <property type="project" value="TreeGrafter"/>
</dbReference>
<dbReference type="GO" id="GO:0043531">
    <property type="term" value="F:ADP binding"/>
    <property type="evidence" value="ECO:0007669"/>
    <property type="project" value="TreeGrafter"/>
</dbReference>
<dbReference type="GO" id="GO:0005524">
    <property type="term" value="F:ATP binding"/>
    <property type="evidence" value="ECO:0007669"/>
    <property type="project" value="UniProtKB-KW"/>
</dbReference>
<dbReference type="GO" id="GO:0004618">
    <property type="term" value="F:phosphoglycerate kinase activity"/>
    <property type="evidence" value="ECO:0007669"/>
    <property type="project" value="UniProtKB-UniRule"/>
</dbReference>
<dbReference type="GO" id="GO:0006094">
    <property type="term" value="P:gluconeogenesis"/>
    <property type="evidence" value="ECO:0007669"/>
    <property type="project" value="TreeGrafter"/>
</dbReference>
<dbReference type="GO" id="GO:0006096">
    <property type="term" value="P:glycolytic process"/>
    <property type="evidence" value="ECO:0007669"/>
    <property type="project" value="UniProtKB-UniRule"/>
</dbReference>
<dbReference type="FunFam" id="3.40.50.1260:FF:000001">
    <property type="entry name" value="Phosphoglycerate kinase"/>
    <property type="match status" value="1"/>
</dbReference>
<dbReference type="FunFam" id="3.40.50.1260:FF:000002">
    <property type="entry name" value="Phosphoglycerate kinase"/>
    <property type="match status" value="1"/>
</dbReference>
<dbReference type="Gene3D" id="3.40.50.1260">
    <property type="entry name" value="Phosphoglycerate kinase, N-terminal domain"/>
    <property type="match status" value="2"/>
</dbReference>
<dbReference type="HAMAP" id="MF_00145">
    <property type="entry name" value="Phosphoglyc_kinase"/>
    <property type="match status" value="1"/>
</dbReference>
<dbReference type="InterPro" id="IPR001576">
    <property type="entry name" value="Phosphoglycerate_kinase"/>
</dbReference>
<dbReference type="InterPro" id="IPR015911">
    <property type="entry name" value="Phosphoglycerate_kinase_CS"/>
</dbReference>
<dbReference type="InterPro" id="IPR015824">
    <property type="entry name" value="Phosphoglycerate_kinase_N"/>
</dbReference>
<dbReference type="InterPro" id="IPR036043">
    <property type="entry name" value="Phosphoglycerate_kinase_sf"/>
</dbReference>
<dbReference type="PANTHER" id="PTHR11406">
    <property type="entry name" value="PHOSPHOGLYCERATE KINASE"/>
    <property type="match status" value="1"/>
</dbReference>
<dbReference type="PANTHER" id="PTHR11406:SF23">
    <property type="entry name" value="PHOSPHOGLYCERATE KINASE 1, CHLOROPLASTIC-RELATED"/>
    <property type="match status" value="1"/>
</dbReference>
<dbReference type="Pfam" id="PF00162">
    <property type="entry name" value="PGK"/>
    <property type="match status" value="1"/>
</dbReference>
<dbReference type="PIRSF" id="PIRSF000724">
    <property type="entry name" value="Pgk"/>
    <property type="match status" value="1"/>
</dbReference>
<dbReference type="PRINTS" id="PR00477">
    <property type="entry name" value="PHGLYCKINASE"/>
</dbReference>
<dbReference type="SUPFAM" id="SSF53748">
    <property type="entry name" value="Phosphoglycerate kinase"/>
    <property type="match status" value="1"/>
</dbReference>
<dbReference type="PROSITE" id="PS00111">
    <property type="entry name" value="PGLYCERATE_KINASE"/>
    <property type="match status" value="1"/>
</dbReference>
<sequence length="395" mass="41275">MNFQRMTDLNLAGKRVLIREDLNVPVKNGVITSDARLRAALPTIKAALEKGAAVMVFSHLGRPVEGEPKPEQSLAPVAAYLTEALGQEVKLFTDYLDGVEVEAGQVVLLENVRFNPGEKKNNPELAQKYAALCDVFVMDAFGTAHRAEASTEGVARFAPVAAAGPLLAAELDALGRAMQTPEKPMVAIVAGSKVSTKLDVLNSLSGICDQLIVGGGIANTFLAAAGYNVGKSLYEADLVETAKQIAAKVSVPLPTDVVVADASQINFEDFLGSLAAAQAVIKKVEDVTANDMILDVGPETAKAFANILTTSKTILWNGPVGVFEVDQFGEGTKALSLAVAQSDAFSIAGGGDTLAAIDKYNVADQIGYISTGGGAFLEFVEGKTLPAVAVLLERA</sequence>
<gene>
    <name evidence="1" type="primary">pgk</name>
    <name type="ordered locus">AB57_1787</name>
</gene>
<reference key="1">
    <citation type="journal article" date="2008" name="J. Bacteriol.">
        <title>Comparative genome sequence analysis of multidrug-resistant Acinetobacter baumannii.</title>
        <authorList>
            <person name="Adams M.D."/>
            <person name="Goglin K."/>
            <person name="Molyneaux N."/>
            <person name="Hujer K.M."/>
            <person name="Lavender H."/>
            <person name="Jamison J.J."/>
            <person name="MacDonald I.J."/>
            <person name="Martin K.M."/>
            <person name="Russo T."/>
            <person name="Campagnari A.A."/>
            <person name="Hujer A.M."/>
            <person name="Bonomo R.A."/>
            <person name="Gill S.R."/>
        </authorList>
    </citation>
    <scope>NUCLEOTIDE SEQUENCE [LARGE SCALE GENOMIC DNA]</scope>
    <source>
        <strain>AB0057</strain>
    </source>
</reference>
<comment type="catalytic activity">
    <reaction evidence="1">
        <text>(2R)-3-phosphoglycerate + ATP = (2R)-3-phospho-glyceroyl phosphate + ADP</text>
        <dbReference type="Rhea" id="RHEA:14801"/>
        <dbReference type="ChEBI" id="CHEBI:30616"/>
        <dbReference type="ChEBI" id="CHEBI:57604"/>
        <dbReference type="ChEBI" id="CHEBI:58272"/>
        <dbReference type="ChEBI" id="CHEBI:456216"/>
        <dbReference type="EC" id="2.7.2.3"/>
    </reaction>
</comment>
<comment type="pathway">
    <text evidence="1">Carbohydrate degradation; glycolysis; pyruvate from D-glyceraldehyde 3-phosphate: step 2/5.</text>
</comment>
<comment type="subunit">
    <text evidence="1">Monomer.</text>
</comment>
<comment type="subcellular location">
    <subcellularLocation>
        <location evidence="1">Cytoplasm</location>
    </subcellularLocation>
</comment>
<comment type="similarity">
    <text evidence="1">Belongs to the phosphoglycerate kinase family.</text>
</comment>